<organism>
    <name type="scientific">Synechococcus sp. (strain JA-2-3B'a(2-13))</name>
    <name type="common">Cyanobacteria bacterium Yellowstone B-Prime</name>
    <dbReference type="NCBI Taxonomy" id="321332"/>
    <lineage>
        <taxon>Bacteria</taxon>
        <taxon>Bacillati</taxon>
        <taxon>Cyanobacteriota</taxon>
        <taxon>Cyanophyceae</taxon>
        <taxon>Synechococcales</taxon>
        <taxon>Synechococcaceae</taxon>
        <taxon>Synechococcus</taxon>
    </lineage>
</organism>
<sequence length="104" mass="11978">MASIEFSPGIQEVPTQVRVLKSKTGNRGSAIFRFEDLKSDTQNILGMRMIDEEGELTTRNIRAKFLNGEFKALEVTYDMETEAEWDRFLRFMERFSAANQMGMA</sequence>
<comment type="subunit">
    <text evidence="1">Part of the photosystem II complex.</text>
</comment>
<comment type="subcellular location">
    <subcellularLocation>
        <location evidence="1">Cellular thylakoid membrane</location>
        <topology evidence="1">Peripheral membrane protein</topology>
        <orientation evidence="1">Cytoplasmic side</orientation>
    </subcellularLocation>
</comment>
<comment type="similarity">
    <text evidence="1">Belongs to the Psb28 family.</text>
</comment>
<feature type="chain" id="PRO_0000271569" description="Photosystem II reaction center Psb28 protein">
    <location>
        <begin position="1"/>
        <end position="104"/>
    </location>
</feature>
<proteinExistence type="inferred from homology"/>
<protein>
    <recommendedName>
        <fullName evidence="1">Photosystem II reaction center Psb28 protein</fullName>
    </recommendedName>
    <alternativeName>
        <fullName evidence="1">Photosystem II 13 kDa protein</fullName>
    </alternativeName>
    <alternativeName>
        <fullName evidence="1">Photosystem II reaction center W protein</fullName>
    </alternativeName>
</protein>
<evidence type="ECO:0000255" key="1">
    <source>
        <dbReference type="HAMAP-Rule" id="MF_01370"/>
    </source>
</evidence>
<dbReference type="EMBL" id="CP000240">
    <property type="protein sequence ID" value="ABD02568.1"/>
    <property type="molecule type" value="Genomic_DNA"/>
</dbReference>
<dbReference type="RefSeq" id="WP_011433213.1">
    <property type="nucleotide sequence ID" value="NC_007776.1"/>
</dbReference>
<dbReference type="SMR" id="Q2JL50"/>
<dbReference type="STRING" id="321332.CYB_1606"/>
<dbReference type="KEGG" id="cyb:CYB_1606"/>
<dbReference type="eggNOG" id="ENOG5031GDS">
    <property type="taxonomic scope" value="Bacteria"/>
</dbReference>
<dbReference type="HOGENOM" id="CLU_137323_1_0_3"/>
<dbReference type="OrthoDB" id="559598at2"/>
<dbReference type="Proteomes" id="UP000001938">
    <property type="component" value="Chromosome"/>
</dbReference>
<dbReference type="GO" id="GO:0009654">
    <property type="term" value="C:photosystem II oxygen evolving complex"/>
    <property type="evidence" value="ECO:0007669"/>
    <property type="project" value="InterPro"/>
</dbReference>
<dbReference type="GO" id="GO:0031676">
    <property type="term" value="C:plasma membrane-derived thylakoid membrane"/>
    <property type="evidence" value="ECO:0007669"/>
    <property type="project" value="UniProtKB-SubCell"/>
</dbReference>
<dbReference type="GO" id="GO:0015979">
    <property type="term" value="P:photosynthesis"/>
    <property type="evidence" value="ECO:0007669"/>
    <property type="project" value="UniProtKB-UniRule"/>
</dbReference>
<dbReference type="Gene3D" id="2.40.30.220">
    <property type="entry name" value="Photosystem II Psb28"/>
    <property type="match status" value="1"/>
</dbReference>
<dbReference type="HAMAP" id="MF_01370">
    <property type="entry name" value="PSII_Psb28"/>
    <property type="match status" value="1"/>
</dbReference>
<dbReference type="InterPro" id="IPR038676">
    <property type="entry name" value="Psb28_c1_sf"/>
</dbReference>
<dbReference type="InterPro" id="IPR005610">
    <property type="entry name" value="PSII_Psb28_class-1"/>
</dbReference>
<dbReference type="NCBIfam" id="TIGR03047">
    <property type="entry name" value="PS_II_psb28"/>
    <property type="match status" value="1"/>
</dbReference>
<dbReference type="PANTHER" id="PTHR34963">
    <property type="match status" value="1"/>
</dbReference>
<dbReference type="PANTHER" id="PTHR34963:SF2">
    <property type="entry name" value="PHOTOSYSTEM II REACTION CENTER PSB28 PROTEIN, CHLOROPLASTIC"/>
    <property type="match status" value="1"/>
</dbReference>
<dbReference type="Pfam" id="PF03912">
    <property type="entry name" value="Psb28"/>
    <property type="match status" value="1"/>
</dbReference>
<keyword id="KW-0472">Membrane</keyword>
<keyword id="KW-0602">Photosynthesis</keyword>
<keyword id="KW-0604">Photosystem II</keyword>
<keyword id="KW-1185">Reference proteome</keyword>
<keyword id="KW-0793">Thylakoid</keyword>
<gene>
    <name evidence="1" type="primary">psb28</name>
    <name type="ordered locus">CYB_1606</name>
</gene>
<accession>Q2JL50</accession>
<name>PSB28_SYNJB</name>
<reference key="1">
    <citation type="journal article" date="2007" name="ISME J.">
        <title>Population level functional diversity in a microbial community revealed by comparative genomic and metagenomic analyses.</title>
        <authorList>
            <person name="Bhaya D."/>
            <person name="Grossman A.R."/>
            <person name="Steunou A.-S."/>
            <person name="Khuri N."/>
            <person name="Cohan F.M."/>
            <person name="Hamamura N."/>
            <person name="Melendrez M.C."/>
            <person name="Bateson M.M."/>
            <person name="Ward D.M."/>
            <person name="Heidelberg J.F."/>
        </authorList>
    </citation>
    <scope>NUCLEOTIDE SEQUENCE [LARGE SCALE GENOMIC DNA]</scope>
    <source>
        <strain>JA-2-3B'a(2-13)</strain>
    </source>
</reference>